<dbReference type="EMBL" id="CP001107">
    <property type="protein sequence ID" value="ACR76026.1"/>
    <property type="molecule type" value="Genomic_DNA"/>
</dbReference>
<dbReference type="RefSeq" id="WP_012743121.1">
    <property type="nucleotide sequence ID" value="NC_012781.1"/>
</dbReference>
<dbReference type="SMR" id="C4ZD63"/>
<dbReference type="STRING" id="515619.EUBREC_2287"/>
<dbReference type="PaxDb" id="515619-EUBREC_2287"/>
<dbReference type="GeneID" id="86989059"/>
<dbReference type="KEGG" id="ere:EUBREC_2287"/>
<dbReference type="HOGENOM" id="CLU_016077_6_2_9"/>
<dbReference type="Proteomes" id="UP000001477">
    <property type="component" value="Chromosome"/>
</dbReference>
<dbReference type="GO" id="GO:0016887">
    <property type="term" value="F:ATP hydrolysis activity"/>
    <property type="evidence" value="ECO:0007669"/>
    <property type="project" value="InterPro"/>
</dbReference>
<dbReference type="GO" id="GO:0005525">
    <property type="term" value="F:GTP binding"/>
    <property type="evidence" value="ECO:0007669"/>
    <property type="project" value="UniProtKB-UniRule"/>
</dbReference>
<dbReference type="GO" id="GO:0043022">
    <property type="term" value="F:ribosome binding"/>
    <property type="evidence" value="ECO:0007669"/>
    <property type="project" value="TreeGrafter"/>
</dbReference>
<dbReference type="GO" id="GO:0042254">
    <property type="term" value="P:ribosome biogenesis"/>
    <property type="evidence" value="ECO:0007669"/>
    <property type="project" value="UniProtKB-KW"/>
</dbReference>
<dbReference type="CDD" id="cd01894">
    <property type="entry name" value="EngA1"/>
    <property type="match status" value="1"/>
</dbReference>
<dbReference type="CDD" id="cd01895">
    <property type="entry name" value="EngA2"/>
    <property type="match status" value="1"/>
</dbReference>
<dbReference type="FunFam" id="3.30.300.20:FF:000004">
    <property type="entry name" value="GTPase Der"/>
    <property type="match status" value="1"/>
</dbReference>
<dbReference type="FunFam" id="3.40.50.300:FF:000040">
    <property type="entry name" value="GTPase Der"/>
    <property type="match status" value="1"/>
</dbReference>
<dbReference type="FunFam" id="3.40.50.300:FF:000057">
    <property type="entry name" value="GTPase Der"/>
    <property type="match status" value="1"/>
</dbReference>
<dbReference type="Gene3D" id="3.30.300.20">
    <property type="match status" value="1"/>
</dbReference>
<dbReference type="Gene3D" id="3.40.50.300">
    <property type="entry name" value="P-loop containing nucleotide triphosphate hydrolases"/>
    <property type="match status" value="2"/>
</dbReference>
<dbReference type="HAMAP" id="MF_00195">
    <property type="entry name" value="GTPase_Der"/>
    <property type="match status" value="1"/>
</dbReference>
<dbReference type="InterPro" id="IPR003593">
    <property type="entry name" value="AAA+_ATPase"/>
</dbReference>
<dbReference type="InterPro" id="IPR031166">
    <property type="entry name" value="G_ENGA"/>
</dbReference>
<dbReference type="InterPro" id="IPR006073">
    <property type="entry name" value="GTP-bd"/>
</dbReference>
<dbReference type="InterPro" id="IPR016484">
    <property type="entry name" value="GTPase_Der"/>
</dbReference>
<dbReference type="InterPro" id="IPR032859">
    <property type="entry name" value="KH_dom-like"/>
</dbReference>
<dbReference type="InterPro" id="IPR015946">
    <property type="entry name" value="KH_dom-like_a/b"/>
</dbReference>
<dbReference type="InterPro" id="IPR027417">
    <property type="entry name" value="P-loop_NTPase"/>
</dbReference>
<dbReference type="InterPro" id="IPR005225">
    <property type="entry name" value="Small_GTP-bd"/>
</dbReference>
<dbReference type="NCBIfam" id="TIGR03594">
    <property type="entry name" value="GTPase_EngA"/>
    <property type="match status" value="1"/>
</dbReference>
<dbReference type="NCBIfam" id="TIGR00231">
    <property type="entry name" value="small_GTP"/>
    <property type="match status" value="2"/>
</dbReference>
<dbReference type="PANTHER" id="PTHR43834">
    <property type="entry name" value="GTPASE DER"/>
    <property type="match status" value="1"/>
</dbReference>
<dbReference type="PANTHER" id="PTHR43834:SF6">
    <property type="entry name" value="GTPASE DER"/>
    <property type="match status" value="1"/>
</dbReference>
<dbReference type="Pfam" id="PF14714">
    <property type="entry name" value="KH_dom-like"/>
    <property type="match status" value="1"/>
</dbReference>
<dbReference type="Pfam" id="PF01926">
    <property type="entry name" value="MMR_HSR1"/>
    <property type="match status" value="2"/>
</dbReference>
<dbReference type="PIRSF" id="PIRSF006485">
    <property type="entry name" value="GTP-binding_EngA"/>
    <property type="match status" value="1"/>
</dbReference>
<dbReference type="PRINTS" id="PR00326">
    <property type="entry name" value="GTP1OBG"/>
</dbReference>
<dbReference type="SMART" id="SM00382">
    <property type="entry name" value="AAA"/>
    <property type="match status" value="2"/>
</dbReference>
<dbReference type="SUPFAM" id="SSF52540">
    <property type="entry name" value="P-loop containing nucleoside triphosphate hydrolases"/>
    <property type="match status" value="2"/>
</dbReference>
<dbReference type="PROSITE" id="PS51712">
    <property type="entry name" value="G_ENGA"/>
    <property type="match status" value="2"/>
</dbReference>
<name>DER_AGARV</name>
<evidence type="ECO:0000255" key="1">
    <source>
        <dbReference type="HAMAP-Rule" id="MF_00195"/>
    </source>
</evidence>
<protein>
    <recommendedName>
        <fullName evidence="1">GTPase Der</fullName>
    </recommendedName>
    <alternativeName>
        <fullName evidence="1">GTP-binding protein EngA</fullName>
    </alternativeName>
</protein>
<proteinExistence type="inferred from homology"/>
<sequence>MSRPVVAIVGRPNVGKSTLFNALAGERISIVKDTPGVTRDRIYADVSWLDYNFTMIDTGGIEPESGDVILSQMREQAQIAIDTADVIIFITDVKQGLVDSDSKVADMLRRSHKPVVLVVNKVDSFEKYMTDVYEFYNLGIGDPHPISAASMLGLGDMLDEVVKHFPDSSKQDDEDDRPRVAIVGKPNVGKSSLINKLAREDRVIVSDIAGTTRDAIDTAIKYDGKEYIFIDTAGLRRKNKIKEDIERYSIIRAVSAVERADVVIVVIDATEGVTEQDAKIAGIAHERGKGIIIAVNKWDAIEKDNNTVKQHTEKIRQILSFIPYAEILFISAKSGQRLNKIFELIDVVIENNSMRVATGVLNEIVTEAVAMQQPPTDKGKRLKIYYVTQVSVKPPTFVIFVNDKNLMHFSYTRYLENRIRDTFGFRGTALKFITRERKENE</sequence>
<feature type="chain" id="PRO_1000204038" description="GTPase Der">
    <location>
        <begin position="1"/>
        <end position="441"/>
    </location>
</feature>
<feature type="domain" description="EngA-type G 1">
    <location>
        <begin position="4"/>
        <end position="169"/>
    </location>
</feature>
<feature type="domain" description="EngA-type G 2">
    <location>
        <begin position="178"/>
        <end position="353"/>
    </location>
</feature>
<feature type="domain" description="KH-like" evidence="1">
    <location>
        <begin position="354"/>
        <end position="438"/>
    </location>
</feature>
<feature type="binding site" evidence="1">
    <location>
        <begin position="10"/>
        <end position="17"/>
    </location>
    <ligand>
        <name>GTP</name>
        <dbReference type="ChEBI" id="CHEBI:37565"/>
        <label>1</label>
    </ligand>
</feature>
<feature type="binding site" evidence="1">
    <location>
        <begin position="57"/>
        <end position="61"/>
    </location>
    <ligand>
        <name>GTP</name>
        <dbReference type="ChEBI" id="CHEBI:37565"/>
        <label>1</label>
    </ligand>
</feature>
<feature type="binding site" evidence="1">
    <location>
        <begin position="120"/>
        <end position="123"/>
    </location>
    <ligand>
        <name>GTP</name>
        <dbReference type="ChEBI" id="CHEBI:37565"/>
        <label>1</label>
    </ligand>
</feature>
<feature type="binding site" evidence="1">
    <location>
        <begin position="184"/>
        <end position="191"/>
    </location>
    <ligand>
        <name>GTP</name>
        <dbReference type="ChEBI" id="CHEBI:37565"/>
        <label>2</label>
    </ligand>
</feature>
<feature type="binding site" evidence="1">
    <location>
        <begin position="231"/>
        <end position="235"/>
    </location>
    <ligand>
        <name>GTP</name>
        <dbReference type="ChEBI" id="CHEBI:37565"/>
        <label>2</label>
    </ligand>
</feature>
<feature type="binding site" evidence="1">
    <location>
        <begin position="296"/>
        <end position="299"/>
    </location>
    <ligand>
        <name>GTP</name>
        <dbReference type="ChEBI" id="CHEBI:37565"/>
        <label>2</label>
    </ligand>
</feature>
<comment type="function">
    <text evidence="1">GTPase that plays an essential role in the late steps of ribosome biogenesis.</text>
</comment>
<comment type="subunit">
    <text evidence="1">Associates with the 50S ribosomal subunit.</text>
</comment>
<comment type="similarity">
    <text evidence="1">Belongs to the TRAFAC class TrmE-Era-EngA-EngB-Septin-like GTPase superfamily. EngA (Der) GTPase family.</text>
</comment>
<gene>
    <name evidence="1" type="primary">der</name>
    <name type="synonym">engA</name>
    <name type="ordered locus">EUBREC_2287</name>
</gene>
<reference key="1">
    <citation type="journal article" date="2009" name="Proc. Natl. Acad. Sci. U.S.A.">
        <title>Characterizing a model human gut microbiota composed of members of its two dominant bacterial phyla.</title>
        <authorList>
            <person name="Mahowald M.A."/>
            <person name="Rey F.E."/>
            <person name="Seedorf H."/>
            <person name="Turnbaugh P.J."/>
            <person name="Fulton R.S."/>
            <person name="Wollam A."/>
            <person name="Shah N."/>
            <person name="Wang C."/>
            <person name="Magrini V."/>
            <person name="Wilson R.K."/>
            <person name="Cantarel B.L."/>
            <person name="Coutinho P.M."/>
            <person name="Henrissat B."/>
            <person name="Crock L.W."/>
            <person name="Russell A."/>
            <person name="Verberkmoes N.C."/>
            <person name="Hettich R.L."/>
            <person name="Gordon J.I."/>
        </authorList>
    </citation>
    <scope>NUCLEOTIDE SEQUENCE [LARGE SCALE GENOMIC DNA]</scope>
    <source>
        <strain>ATCC 33656 / DSM 3377 / JCM 17463 / KCTC 5835 / LMG 30912 / VPI 0990</strain>
    </source>
</reference>
<keyword id="KW-0342">GTP-binding</keyword>
<keyword id="KW-0547">Nucleotide-binding</keyword>
<keyword id="KW-0677">Repeat</keyword>
<keyword id="KW-0690">Ribosome biogenesis</keyword>
<organism>
    <name type="scientific">Agathobacter rectalis (strain ATCC 33656 / DSM 3377 / JCM 17463 / KCTC 5835 / VPI 0990)</name>
    <name type="common">Eubacterium rectale</name>
    <dbReference type="NCBI Taxonomy" id="515619"/>
    <lineage>
        <taxon>Bacteria</taxon>
        <taxon>Bacillati</taxon>
        <taxon>Bacillota</taxon>
        <taxon>Clostridia</taxon>
        <taxon>Lachnospirales</taxon>
        <taxon>Lachnospiraceae</taxon>
        <taxon>Agathobacter</taxon>
    </lineage>
</organism>
<accession>C4ZD63</accession>